<name>OBG_ROSCS</name>
<comment type="function">
    <text evidence="1">An essential GTPase which binds GTP, GDP and possibly (p)ppGpp with moderate affinity, with high nucleotide exchange rates and a fairly low GTP hydrolysis rate. Plays a role in control of the cell cycle, stress response, ribosome biogenesis and in those bacteria that undergo differentiation, in morphogenesis control.</text>
</comment>
<comment type="cofactor">
    <cofactor evidence="1">
        <name>Mg(2+)</name>
        <dbReference type="ChEBI" id="CHEBI:18420"/>
    </cofactor>
</comment>
<comment type="subunit">
    <text evidence="1">Monomer.</text>
</comment>
<comment type="subcellular location">
    <subcellularLocation>
        <location evidence="1">Cytoplasm</location>
    </subcellularLocation>
</comment>
<comment type="similarity">
    <text evidence="1">Belongs to the TRAFAC class OBG-HflX-like GTPase superfamily. OBG GTPase family.</text>
</comment>
<comment type="sequence caution" evidence="4">
    <conflict type="erroneous initiation">
        <sequence resource="EMBL-CDS" id="ABU60292"/>
    </conflict>
    <text>Extended N-terminus.</text>
</comment>
<feature type="chain" id="PRO_0000386209" description="GTPase Obg">
    <location>
        <begin position="1"/>
        <end position="439"/>
    </location>
</feature>
<feature type="domain" description="Obg" evidence="3">
    <location>
        <begin position="3"/>
        <end position="162"/>
    </location>
</feature>
<feature type="domain" description="OBG-type G" evidence="1">
    <location>
        <begin position="163"/>
        <end position="333"/>
    </location>
</feature>
<feature type="domain" description="OCT" evidence="2">
    <location>
        <begin position="351"/>
        <end position="428"/>
    </location>
</feature>
<feature type="binding site" evidence="1">
    <location>
        <begin position="169"/>
        <end position="176"/>
    </location>
    <ligand>
        <name>GTP</name>
        <dbReference type="ChEBI" id="CHEBI:37565"/>
    </ligand>
</feature>
<feature type="binding site" evidence="1">
    <location>
        <position position="176"/>
    </location>
    <ligand>
        <name>Mg(2+)</name>
        <dbReference type="ChEBI" id="CHEBI:18420"/>
    </ligand>
</feature>
<feature type="binding site" evidence="1">
    <location>
        <begin position="194"/>
        <end position="198"/>
    </location>
    <ligand>
        <name>GTP</name>
        <dbReference type="ChEBI" id="CHEBI:37565"/>
    </ligand>
</feature>
<feature type="binding site" evidence="1">
    <location>
        <position position="196"/>
    </location>
    <ligand>
        <name>Mg(2+)</name>
        <dbReference type="ChEBI" id="CHEBI:18420"/>
    </ligand>
</feature>
<feature type="binding site" evidence="1">
    <location>
        <begin position="215"/>
        <end position="218"/>
    </location>
    <ligand>
        <name>GTP</name>
        <dbReference type="ChEBI" id="CHEBI:37565"/>
    </ligand>
</feature>
<feature type="binding site" evidence="1">
    <location>
        <begin position="285"/>
        <end position="288"/>
    </location>
    <ligand>
        <name>GTP</name>
        <dbReference type="ChEBI" id="CHEBI:37565"/>
    </ligand>
</feature>
<feature type="binding site" evidence="1">
    <location>
        <begin position="314"/>
        <end position="316"/>
    </location>
    <ligand>
        <name>GTP</name>
        <dbReference type="ChEBI" id="CHEBI:37565"/>
    </ligand>
</feature>
<evidence type="ECO:0000255" key="1">
    <source>
        <dbReference type="HAMAP-Rule" id="MF_01454"/>
    </source>
</evidence>
<evidence type="ECO:0000255" key="2">
    <source>
        <dbReference type="PROSITE-ProRule" id="PRU01229"/>
    </source>
</evidence>
<evidence type="ECO:0000255" key="3">
    <source>
        <dbReference type="PROSITE-ProRule" id="PRU01231"/>
    </source>
</evidence>
<evidence type="ECO:0000305" key="4"/>
<sequence>MAGEFYDSARIFVQAGDGGDGAATFRREKYVPRGGPDGGDGGRGGHVYLVADPGLNTLLPFRERTRFIAERGGNGGRSRKHGRNGRDVFIRVPVGTVARTVIDGETYSVDLDAPGLRLLAARGGRGGLGNVHFATSSYQVPRIAELGEPGERREIELELKLLADVGLIGFPNAGKSTLLSVISAARPKIAPYPFTTLQPNLGVVEVGEYSFVVADIPGLIEGAHRGVGLGFSFLRHIERTRLLIHIIDAAGVDGRDPVNDFSAINEELRLYQPALAQRPQVVALNKADLPEAQANLKRLRAAIPVSEQDLFVISAATREGVDALLQRVAERLREMPAPHRAPRDETLTWPVPEVDERLYTIERTGDGWRVRGRRIERLISMTNFAQPDAIMRIQRVLEASGIGAALQEAGIQNGDVLYIEQAAFDWEDGAITYRMPGVS</sequence>
<keyword id="KW-0963">Cytoplasm</keyword>
<keyword id="KW-0342">GTP-binding</keyword>
<keyword id="KW-0378">Hydrolase</keyword>
<keyword id="KW-0460">Magnesium</keyword>
<keyword id="KW-0479">Metal-binding</keyword>
<keyword id="KW-0547">Nucleotide-binding</keyword>
<keyword id="KW-1185">Reference proteome</keyword>
<reference key="1">
    <citation type="submission" date="2007-08" db="EMBL/GenBank/DDBJ databases">
        <title>Complete sequence of Roseiflexus castenholzii DSM 13941.</title>
        <authorList>
            <consortium name="US DOE Joint Genome Institute"/>
            <person name="Copeland A."/>
            <person name="Lucas S."/>
            <person name="Lapidus A."/>
            <person name="Barry K."/>
            <person name="Glavina del Rio T."/>
            <person name="Dalin E."/>
            <person name="Tice H."/>
            <person name="Pitluck S."/>
            <person name="Thompson L.S."/>
            <person name="Brettin T."/>
            <person name="Bruce D."/>
            <person name="Detter J.C."/>
            <person name="Han C."/>
            <person name="Tapia R."/>
            <person name="Schmutz J."/>
            <person name="Larimer F."/>
            <person name="Land M."/>
            <person name="Hauser L."/>
            <person name="Kyrpides N."/>
            <person name="Mikhailova N."/>
            <person name="Bryant D.A."/>
            <person name="Hanada S."/>
            <person name="Tsukatani Y."/>
            <person name="Richardson P."/>
        </authorList>
    </citation>
    <scope>NUCLEOTIDE SEQUENCE [LARGE SCALE GENOMIC DNA]</scope>
    <source>
        <strain>DSM 13941 / HLO8</strain>
    </source>
</reference>
<gene>
    <name evidence="1" type="primary">obg</name>
    <name type="ordered locus">Rcas_4265</name>
</gene>
<proteinExistence type="inferred from homology"/>
<accession>A7NRU6</accession>
<dbReference type="EC" id="3.6.5.-" evidence="1"/>
<dbReference type="EMBL" id="CP000804">
    <property type="protein sequence ID" value="ABU60292.1"/>
    <property type="status" value="ALT_INIT"/>
    <property type="molecule type" value="Genomic_DNA"/>
</dbReference>
<dbReference type="RefSeq" id="WP_041331260.1">
    <property type="nucleotide sequence ID" value="NC_009767.1"/>
</dbReference>
<dbReference type="SMR" id="A7NRU6"/>
<dbReference type="STRING" id="383372.Rcas_4265"/>
<dbReference type="KEGG" id="rca:Rcas_4265"/>
<dbReference type="eggNOG" id="COG0536">
    <property type="taxonomic scope" value="Bacteria"/>
</dbReference>
<dbReference type="HOGENOM" id="CLU_011747_2_1_0"/>
<dbReference type="OrthoDB" id="9807318at2"/>
<dbReference type="Proteomes" id="UP000000263">
    <property type="component" value="Chromosome"/>
</dbReference>
<dbReference type="GO" id="GO:0005737">
    <property type="term" value="C:cytoplasm"/>
    <property type="evidence" value="ECO:0007669"/>
    <property type="project" value="UniProtKB-SubCell"/>
</dbReference>
<dbReference type="GO" id="GO:0005525">
    <property type="term" value="F:GTP binding"/>
    <property type="evidence" value="ECO:0007669"/>
    <property type="project" value="UniProtKB-UniRule"/>
</dbReference>
<dbReference type="GO" id="GO:0003924">
    <property type="term" value="F:GTPase activity"/>
    <property type="evidence" value="ECO:0007669"/>
    <property type="project" value="UniProtKB-UniRule"/>
</dbReference>
<dbReference type="GO" id="GO:0000287">
    <property type="term" value="F:magnesium ion binding"/>
    <property type="evidence" value="ECO:0007669"/>
    <property type="project" value="InterPro"/>
</dbReference>
<dbReference type="GO" id="GO:0042254">
    <property type="term" value="P:ribosome biogenesis"/>
    <property type="evidence" value="ECO:0007669"/>
    <property type="project" value="UniProtKB-UniRule"/>
</dbReference>
<dbReference type="CDD" id="cd01898">
    <property type="entry name" value="Obg"/>
    <property type="match status" value="1"/>
</dbReference>
<dbReference type="FunFam" id="2.70.210.12:FF:000001">
    <property type="entry name" value="GTPase Obg"/>
    <property type="match status" value="1"/>
</dbReference>
<dbReference type="Gene3D" id="3.30.300.350">
    <property type="entry name" value="GTP-binding protein OBG, C-terminal domain"/>
    <property type="match status" value="1"/>
</dbReference>
<dbReference type="Gene3D" id="2.70.210.12">
    <property type="entry name" value="GTP1/OBG domain"/>
    <property type="match status" value="1"/>
</dbReference>
<dbReference type="Gene3D" id="3.40.50.300">
    <property type="entry name" value="P-loop containing nucleotide triphosphate hydrolases"/>
    <property type="match status" value="1"/>
</dbReference>
<dbReference type="HAMAP" id="MF_01454">
    <property type="entry name" value="GTPase_Obg"/>
    <property type="match status" value="1"/>
</dbReference>
<dbReference type="InterPro" id="IPR031167">
    <property type="entry name" value="G_OBG"/>
</dbReference>
<dbReference type="InterPro" id="IPR006073">
    <property type="entry name" value="GTP-bd"/>
</dbReference>
<dbReference type="InterPro" id="IPR014100">
    <property type="entry name" value="GTP-bd_Obg/CgtA"/>
</dbReference>
<dbReference type="InterPro" id="IPR036346">
    <property type="entry name" value="GTP-bd_prot_GTP1/OBG_C_sf"/>
</dbReference>
<dbReference type="InterPro" id="IPR006074">
    <property type="entry name" value="GTP1-OBG_CS"/>
</dbReference>
<dbReference type="InterPro" id="IPR006169">
    <property type="entry name" value="GTP1_OBG_dom"/>
</dbReference>
<dbReference type="InterPro" id="IPR036726">
    <property type="entry name" value="GTP1_OBG_dom_sf"/>
</dbReference>
<dbReference type="InterPro" id="IPR045086">
    <property type="entry name" value="OBG_GTPase"/>
</dbReference>
<dbReference type="InterPro" id="IPR015349">
    <property type="entry name" value="OCT_dom"/>
</dbReference>
<dbReference type="InterPro" id="IPR027417">
    <property type="entry name" value="P-loop_NTPase"/>
</dbReference>
<dbReference type="NCBIfam" id="TIGR02729">
    <property type="entry name" value="Obg_CgtA"/>
    <property type="match status" value="1"/>
</dbReference>
<dbReference type="NCBIfam" id="TIGR03595">
    <property type="entry name" value="Obg_CgtA_exten"/>
    <property type="match status" value="1"/>
</dbReference>
<dbReference type="NCBIfam" id="NF008954">
    <property type="entry name" value="PRK12296.1"/>
    <property type="match status" value="1"/>
</dbReference>
<dbReference type="NCBIfam" id="NF008955">
    <property type="entry name" value="PRK12297.1"/>
    <property type="match status" value="1"/>
</dbReference>
<dbReference type="NCBIfam" id="NF008956">
    <property type="entry name" value="PRK12299.1"/>
    <property type="match status" value="1"/>
</dbReference>
<dbReference type="PANTHER" id="PTHR11702">
    <property type="entry name" value="DEVELOPMENTALLY REGULATED GTP-BINDING PROTEIN-RELATED"/>
    <property type="match status" value="1"/>
</dbReference>
<dbReference type="PANTHER" id="PTHR11702:SF31">
    <property type="entry name" value="MITOCHONDRIAL RIBOSOME-ASSOCIATED GTPASE 2"/>
    <property type="match status" value="1"/>
</dbReference>
<dbReference type="Pfam" id="PF09269">
    <property type="entry name" value="DUF1967"/>
    <property type="match status" value="1"/>
</dbReference>
<dbReference type="Pfam" id="PF01018">
    <property type="entry name" value="GTP1_OBG"/>
    <property type="match status" value="1"/>
</dbReference>
<dbReference type="Pfam" id="PF01926">
    <property type="entry name" value="MMR_HSR1"/>
    <property type="match status" value="1"/>
</dbReference>
<dbReference type="PRINTS" id="PR00326">
    <property type="entry name" value="GTP1OBG"/>
</dbReference>
<dbReference type="SUPFAM" id="SSF102741">
    <property type="entry name" value="Obg GTP-binding protein C-terminal domain"/>
    <property type="match status" value="1"/>
</dbReference>
<dbReference type="SUPFAM" id="SSF82051">
    <property type="entry name" value="Obg GTP-binding protein N-terminal domain"/>
    <property type="match status" value="1"/>
</dbReference>
<dbReference type="SUPFAM" id="SSF52540">
    <property type="entry name" value="P-loop containing nucleoside triphosphate hydrolases"/>
    <property type="match status" value="1"/>
</dbReference>
<dbReference type="PROSITE" id="PS51710">
    <property type="entry name" value="G_OBG"/>
    <property type="match status" value="1"/>
</dbReference>
<dbReference type="PROSITE" id="PS00905">
    <property type="entry name" value="GTP1_OBG"/>
    <property type="match status" value="1"/>
</dbReference>
<dbReference type="PROSITE" id="PS51883">
    <property type="entry name" value="OBG"/>
    <property type="match status" value="1"/>
</dbReference>
<dbReference type="PROSITE" id="PS51881">
    <property type="entry name" value="OCT"/>
    <property type="match status" value="1"/>
</dbReference>
<organism>
    <name type="scientific">Roseiflexus castenholzii (strain DSM 13941 / HLO8)</name>
    <dbReference type="NCBI Taxonomy" id="383372"/>
    <lineage>
        <taxon>Bacteria</taxon>
        <taxon>Bacillati</taxon>
        <taxon>Chloroflexota</taxon>
        <taxon>Chloroflexia</taxon>
        <taxon>Chloroflexales</taxon>
        <taxon>Roseiflexineae</taxon>
        <taxon>Roseiflexaceae</taxon>
        <taxon>Roseiflexus</taxon>
    </lineage>
</organism>
<protein>
    <recommendedName>
        <fullName evidence="1">GTPase Obg</fullName>
        <ecNumber evidence="1">3.6.5.-</ecNumber>
    </recommendedName>
    <alternativeName>
        <fullName evidence="1">GTP-binding protein Obg</fullName>
    </alternativeName>
</protein>